<dbReference type="EC" id="2.1.1.163" evidence="1"/>
<dbReference type="EMBL" id="AP009351">
    <property type="protein sequence ID" value="BAF67652.1"/>
    <property type="molecule type" value="Genomic_DNA"/>
</dbReference>
<dbReference type="RefSeq" id="WP_000774684.1">
    <property type="nucleotide sequence ID" value="NZ_JBBIAE010000001.1"/>
</dbReference>
<dbReference type="SMR" id="A6QH20"/>
<dbReference type="KEGG" id="sae:NWMN_1380"/>
<dbReference type="HOGENOM" id="CLU_037990_0_0_9"/>
<dbReference type="UniPathway" id="UPA00079">
    <property type="reaction ID" value="UER00169"/>
</dbReference>
<dbReference type="Proteomes" id="UP000006386">
    <property type="component" value="Chromosome"/>
</dbReference>
<dbReference type="GO" id="GO:0043770">
    <property type="term" value="F:demethylmenaquinone methyltransferase activity"/>
    <property type="evidence" value="ECO:0007669"/>
    <property type="project" value="UniProtKB-UniRule"/>
</dbReference>
<dbReference type="GO" id="GO:0009234">
    <property type="term" value="P:menaquinone biosynthetic process"/>
    <property type="evidence" value="ECO:0007669"/>
    <property type="project" value="UniProtKB-UniRule"/>
</dbReference>
<dbReference type="GO" id="GO:0032259">
    <property type="term" value="P:methylation"/>
    <property type="evidence" value="ECO:0007669"/>
    <property type="project" value="UniProtKB-KW"/>
</dbReference>
<dbReference type="CDD" id="cd02440">
    <property type="entry name" value="AdoMet_MTases"/>
    <property type="match status" value="1"/>
</dbReference>
<dbReference type="FunFam" id="3.40.50.150:FF:000086">
    <property type="entry name" value="Demethylmenaquinone methyltransferase"/>
    <property type="match status" value="1"/>
</dbReference>
<dbReference type="Gene3D" id="3.40.50.150">
    <property type="entry name" value="Vaccinia Virus protein VP39"/>
    <property type="match status" value="1"/>
</dbReference>
<dbReference type="HAMAP" id="MF_01813">
    <property type="entry name" value="MenG_UbiE_methyltr"/>
    <property type="match status" value="1"/>
</dbReference>
<dbReference type="InterPro" id="IPR029063">
    <property type="entry name" value="SAM-dependent_MTases_sf"/>
</dbReference>
<dbReference type="InterPro" id="IPR004033">
    <property type="entry name" value="UbiE/COQ5_MeTrFase"/>
</dbReference>
<dbReference type="InterPro" id="IPR023576">
    <property type="entry name" value="UbiE/COQ5_MeTrFase_CS"/>
</dbReference>
<dbReference type="NCBIfam" id="TIGR01934">
    <property type="entry name" value="MenG_MenH_UbiE"/>
    <property type="match status" value="1"/>
</dbReference>
<dbReference type="NCBIfam" id="NF001243">
    <property type="entry name" value="PRK00216.1-4"/>
    <property type="match status" value="1"/>
</dbReference>
<dbReference type="NCBIfam" id="NF001244">
    <property type="entry name" value="PRK00216.1-5"/>
    <property type="match status" value="1"/>
</dbReference>
<dbReference type="PANTHER" id="PTHR43591:SF24">
    <property type="entry name" value="2-METHOXY-6-POLYPRENYL-1,4-BENZOQUINOL METHYLASE, MITOCHONDRIAL"/>
    <property type="match status" value="1"/>
</dbReference>
<dbReference type="PANTHER" id="PTHR43591">
    <property type="entry name" value="METHYLTRANSFERASE"/>
    <property type="match status" value="1"/>
</dbReference>
<dbReference type="Pfam" id="PF01209">
    <property type="entry name" value="Ubie_methyltran"/>
    <property type="match status" value="1"/>
</dbReference>
<dbReference type="SUPFAM" id="SSF53335">
    <property type="entry name" value="S-adenosyl-L-methionine-dependent methyltransferases"/>
    <property type="match status" value="1"/>
</dbReference>
<dbReference type="PROSITE" id="PS51608">
    <property type="entry name" value="SAM_MT_UBIE"/>
    <property type="match status" value="1"/>
</dbReference>
<dbReference type="PROSITE" id="PS01183">
    <property type="entry name" value="UBIE_1"/>
    <property type="match status" value="1"/>
</dbReference>
<dbReference type="PROSITE" id="PS01184">
    <property type="entry name" value="UBIE_2"/>
    <property type="match status" value="1"/>
</dbReference>
<comment type="function">
    <text evidence="1">Methyltransferase required for the conversion of demethylmenaquinol (DMKH2) to menaquinol (MKH2).</text>
</comment>
<comment type="catalytic activity">
    <reaction evidence="1">
        <text>a 2-demethylmenaquinol + S-adenosyl-L-methionine = a menaquinol + S-adenosyl-L-homocysteine + H(+)</text>
        <dbReference type="Rhea" id="RHEA:42640"/>
        <dbReference type="Rhea" id="RHEA-COMP:9539"/>
        <dbReference type="Rhea" id="RHEA-COMP:9563"/>
        <dbReference type="ChEBI" id="CHEBI:15378"/>
        <dbReference type="ChEBI" id="CHEBI:18151"/>
        <dbReference type="ChEBI" id="CHEBI:55437"/>
        <dbReference type="ChEBI" id="CHEBI:57856"/>
        <dbReference type="ChEBI" id="CHEBI:59789"/>
        <dbReference type="EC" id="2.1.1.163"/>
    </reaction>
</comment>
<comment type="pathway">
    <text evidence="1">Quinol/quinone metabolism; menaquinone biosynthesis; menaquinol from 1,4-dihydroxy-2-naphthoate: step 2/2.</text>
</comment>
<comment type="similarity">
    <text evidence="1">Belongs to the class I-like SAM-binding methyltransferase superfamily. MenG/UbiE family.</text>
</comment>
<sequence>MADNKANKEQVHRVFQNISKKYDRLNNIISFEQHKVWRKRVMKDMGVRKGTKALDVCCGTGDWTIALSKAVGPTGEVTGIDFSENMLEVGKEKTASMENVKLVHGDAMELPFEDNSFDYVTIGFGLRNVPDYLVALKEMNRVLKPGGMVVCLETSQPTLPVFKQMYALYFKFVMPIFGKLFAKSKEEYEWLQQSTFNFPGKEELKRMFEEAGFINVRVRSFTGGVAAMHLGYKEKDNTKGD</sequence>
<proteinExistence type="inferred from homology"/>
<reference key="1">
    <citation type="journal article" date="2008" name="J. Bacteriol.">
        <title>Genome sequence of Staphylococcus aureus strain Newman and comparative analysis of staphylococcal genomes: polymorphism and evolution of two major pathogenicity islands.</title>
        <authorList>
            <person name="Baba T."/>
            <person name="Bae T."/>
            <person name="Schneewind O."/>
            <person name="Takeuchi F."/>
            <person name="Hiramatsu K."/>
        </authorList>
    </citation>
    <scope>NUCLEOTIDE SEQUENCE [LARGE SCALE GENOMIC DNA]</scope>
    <source>
        <strain>Newman</strain>
    </source>
</reference>
<name>MENG_STAAE</name>
<evidence type="ECO:0000255" key="1">
    <source>
        <dbReference type="HAMAP-Rule" id="MF_01813"/>
    </source>
</evidence>
<feature type="chain" id="PRO_1000073677" description="Demethylmenaquinone methyltransferase">
    <location>
        <begin position="1"/>
        <end position="241"/>
    </location>
</feature>
<feature type="binding site" evidence="1">
    <location>
        <position position="60"/>
    </location>
    <ligand>
        <name>S-adenosyl-L-methionine</name>
        <dbReference type="ChEBI" id="CHEBI:59789"/>
    </ligand>
</feature>
<feature type="binding site" evidence="1">
    <location>
        <position position="81"/>
    </location>
    <ligand>
        <name>S-adenosyl-L-methionine</name>
        <dbReference type="ChEBI" id="CHEBI:59789"/>
    </ligand>
</feature>
<feature type="binding site" evidence="1">
    <location>
        <begin position="106"/>
        <end position="107"/>
    </location>
    <ligand>
        <name>S-adenosyl-L-methionine</name>
        <dbReference type="ChEBI" id="CHEBI:59789"/>
    </ligand>
</feature>
<protein>
    <recommendedName>
        <fullName evidence="1">Demethylmenaquinone methyltransferase</fullName>
        <ecNumber evidence="1">2.1.1.163</ecNumber>
    </recommendedName>
</protein>
<gene>
    <name evidence="1" type="primary">menG</name>
    <name type="ordered locus">NWMN_1380</name>
</gene>
<organism>
    <name type="scientific">Staphylococcus aureus (strain Newman)</name>
    <dbReference type="NCBI Taxonomy" id="426430"/>
    <lineage>
        <taxon>Bacteria</taxon>
        <taxon>Bacillati</taxon>
        <taxon>Bacillota</taxon>
        <taxon>Bacilli</taxon>
        <taxon>Bacillales</taxon>
        <taxon>Staphylococcaceae</taxon>
        <taxon>Staphylococcus</taxon>
    </lineage>
</organism>
<keyword id="KW-0474">Menaquinone biosynthesis</keyword>
<keyword id="KW-0489">Methyltransferase</keyword>
<keyword id="KW-0949">S-adenosyl-L-methionine</keyword>
<keyword id="KW-0808">Transferase</keyword>
<accession>A6QH20</accession>